<keyword id="KW-0067">ATP-binding</keyword>
<keyword id="KW-0436">Ligase</keyword>
<keyword id="KW-0547">Nucleotide-binding</keyword>
<keyword id="KW-0648">Protein biosynthesis</keyword>
<accession>C4ZHB9</accession>
<evidence type="ECO:0000255" key="1">
    <source>
        <dbReference type="HAMAP-Rule" id="MF_00120"/>
    </source>
</evidence>
<protein>
    <recommendedName>
        <fullName evidence="1">Glutamyl-tRNA(Gln) amidotransferase subunit A</fullName>
        <shortName evidence="1">Glu-ADT subunit A</shortName>
        <ecNumber evidence="1">6.3.5.7</ecNumber>
    </recommendedName>
</protein>
<gene>
    <name evidence="1" type="primary">gatA</name>
    <name type="ordered locus">EUBREC_1169</name>
</gene>
<proteinExistence type="inferred from homology"/>
<feature type="chain" id="PRO_1000203035" description="Glutamyl-tRNA(Gln) amidotransferase subunit A">
    <location>
        <begin position="1"/>
        <end position="503"/>
    </location>
</feature>
<feature type="active site" description="Charge relay system" evidence="1">
    <location>
        <position position="79"/>
    </location>
</feature>
<feature type="active site" description="Charge relay system" evidence="1">
    <location>
        <position position="154"/>
    </location>
</feature>
<feature type="active site" description="Acyl-ester intermediate" evidence="1">
    <location>
        <position position="178"/>
    </location>
</feature>
<organism>
    <name type="scientific">Agathobacter rectalis (strain ATCC 33656 / DSM 3377 / JCM 17463 / KCTC 5835 / VPI 0990)</name>
    <name type="common">Eubacterium rectale</name>
    <dbReference type="NCBI Taxonomy" id="515619"/>
    <lineage>
        <taxon>Bacteria</taxon>
        <taxon>Bacillati</taxon>
        <taxon>Bacillota</taxon>
        <taxon>Clostridia</taxon>
        <taxon>Lachnospirales</taxon>
        <taxon>Lachnospiraceae</taxon>
        <taxon>Agathobacter</taxon>
    </lineage>
</organism>
<name>GATA_AGARV</name>
<dbReference type="EC" id="6.3.5.7" evidence="1"/>
<dbReference type="EMBL" id="CP001107">
    <property type="protein sequence ID" value="ACR74931.1"/>
    <property type="molecule type" value="Genomic_DNA"/>
</dbReference>
<dbReference type="RefSeq" id="WP_012742032.1">
    <property type="nucleotide sequence ID" value="NC_012781.1"/>
</dbReference>
<dbReference type="SMR" id="C4ZHB9"/>
<dbReference type="STRING" id="515619.EUBREC_1169"/>
<dbReference type="PaxDb" id="515619-EUBREC_1169"/>
<dbReference type="GeneID" id="86988016"/>
<dbReference type="KEGG" id="ere:EUBREC_1169"/>
<dbReference type="HOGENOM" id="CLU_009600_0_3_9"/>
<dbReference type="Proteomes" id="UP000001477">
    <property type="component" value="Chromosome"/>
</dbReference>
<dbReference type="GO" id="GO:0030956">
    <property type="term" value="C:glutamyl-tRNA(Gln) amidotransferase complex"/>
    <property type="evidence" value="ECO:0007669"/>
    <property type="project" value="InterPro"/>
</dbReference>
<dbReference type="GO" id="GO:0005524">
    <property type="term" value="F:ATP binding"/>
    <property type="evidence" value="ECO:0007669"/>
    <property type="project" value="UniProtKB-KW"/>
</dbReference>
<dbReference type="GO" id="GO:0050567">
    <property type="term" value="F:glutaminyl-tRNA synthase (glutamine-hydrolyzing) activity"/>
    <property type="evidence" value="ECO:0007669"/>
    <property type="project" value="UniProtKB-UniRule"/>
</dbReference>
<dbReference type="GO" id="GO:0006412">
    <property type="term" value="P:translation"/>
    <property type="evidence" value="ECO:0007669"/>
    <property type="project" value="UniProtKB-UniRule"/>
</dbReference>
<dbReference type="Gene3D" id="3.90.1300.10">
    <property type="entry name" value="Amidase signature (AS) domain"/>
    <property type="match status" value="1"/>
</dbReference>
<dbReference type="HAMAP" id="MF_00120">
    <property type="entry name" value="GatA"/>
    <property type="match status" value="1"/>
</dbReference>
<dbReference type="InterPro" id="IPR000120">
    <property type="entry name" value="Amidase"/>
</dbReference>
<dbReference type="InterPro" id="IPR023631">
    <property type="entry name" value="Amidase_dom"/>
</dbReference>
<dbReference type="InterPro" id="IPR036928">
    <property type="entry name" value="AS_sf"/>
</dbReference>
<dbReference type="InterPro" id="IPR004412">
    <property type="entry name" value="GatA"/>
</dbReference>
<dbReference type="NCBIfam" id="TIGR00132">
    <property type="entry name" value="gatA"/>
    <property type="match status" value="1"/>
</dbReference>
<dbReference type="PANTHER" id="PTHR11895:SF151">
    <property type="entry name" value="GLUTAMYL-TRNA(GLN) AMIDOTRANSFERASE SUBUNIT A"/>
    <property type="match status" value="1"/>
</dbReference>
<dbReference type="PANTHER" id="PTHR11895">
    <property type="entry name" value="TRANSAMIDASE"/>
    <property type="match status" value="1"/>
</dbReference>
<dbReference type="Pfam" id="PF01425">
    <property type="entry name" value="Amidase"/>
    <property type="match status" value="1"/>
</dbReference>
<dbReference type="SUPFAM" id="SSF75304">
    <property type="entry name" value="Amidase signature (AS) enzymes"/>
    <property type="match status" value="1"/>
</dbReference>
<comment type="function">
    <text evidence="1">Allows the formation of correctly charged Gln-tRNA(Gln) through the transamidation of misacylated Glu-tRNA(Gln) in organisms which lack glutaminyl-tRNA synthetase. The reaction takes place in the presence of glutamine and ATP through an activated gamma-phospho-Glu-tRNA(Gln).</text>
</comment>
<comment type="catalytic activity">
    <reaction evidence="1">
        <text>L-glutamyl-tRNA(Gln) + L-glutamine + ATP + H2O = L-glutaminyl-tRNA(Gln) + L-glutamate + ADP + phosphate + H(+)</text>
        <dbReference type="Rhea" id="RHEA:17521"/>
        <dbReference type="Rhea" id="RHEA-COMP:9681"/>
        <dbReference type="Rhea" id="RHEA-COMP:9684"/>
        <dbReference type="ChEBI" id="CHEBI:15377"/>
        <dbReference type="ChEBI" id="CHEBI:15378"/>
        <dbReference type="ChEBI" id="CHEBI:29985"/>
        <dbReference type="ChEBI" id="CHEBI:30616"/>
        <dbReference type="ChEBI" id="CHEBI:43474"/>
        <dbReference type="ChEBI" id="CHEBI:58359"/>
        <dbReference type="ChEBI" id="CHEBI:78520"/>
        <dbReference type="ChEBI" id="CHEBI:78521"/>
        <dbReference type="ChEBI" id="CHEBI:456216"/>
        <dbReference type="EC" id="6.3.5.7"/>
    </reaction>
</comment>
<comment type="subunit">
    <text evidence="1">Heterotrimer of A, B and C subunits.</text>
</comment>
<comment type="similarity">
    <text evidence="1">Belongs to the amidase family. GatA subfamily.</text>
</comment>
<sequence length="503" mass="53723">MDLMSLTAVELGKKIQAKEVTVEEAVKAAIASIKAKEEKINSFVTIDEEGALKKAAEVQAKIDAGELKGALAGVPVAIKDNMCTEGLLTTCSSKILYNFIPTYTAEAVKRLEDAGCVIVGKTNMDEFAMGSTTETSAFGATKNPWNTEHVPGGSSGGSCAAVAAEEVPFALGSDTGGSIRQPSSFCGVTGIKPTYGTVSRYGLIAYGSSLDQIGPIAKDVTDCAIILEAIASYDTKDSTSVNRDDLKFTEALVDDVKGMKIGIPKDYLGDGLDPEVKSAILAAADELKKKGAVVEEFDLGLVEYAIPAYYVIACAEASSNLARFDGVKYGYRTKEYTDLHNMYKKSRSEGFGPEVKRRIMLGSFVLSSGYYDAYYLKALRVKALIKKAFDDAFAKYDVILGPAAPTTAPKLGESLSDPIQMYLGDIYTISVNLAGLPGISLPCGMDKNGLPIGLQLIGDCFKEKNIIRAAYSFEKTRELKRSTIAEEYSNKNTADTNKSAGAQ</sequence>
<reference key="1">
    <citation type="journal article" date="2009" name="Proc. Natl. Acad. Sci. U.S.A.">
        <title>Characterizing a model human gut microbiota composed of members of its two dominant bacterial phyla.</title>
        <authorList>
            <person name="Mahowald M.A."/>
            <person name="Rey F.E."/>
            <person name="Seedorf H."/>
            <person name="Turnbaugh P.J."/>
            <person name="Fulton R.S."/>
            <person name="Wollam A."/>
            <person name="Shah N."/>
            <person name="Wang C."/>
            <person name="Magrini V."/>
            <person name="Wilson R.K."/>
            <person name="Cantarel B.L."/>
            <person name="Coutinho P.M."/>
            <person name="Henrissat B."/>
            <person name="Crock L.W."/>
            <person name="Russell A."/>
            <person name="Verberkmoes N.C."/>
            <person name="Hettich R.L."/>
            <person name="Gordon J.I."/>
        </authorList>
    </citation>
    <scope>NUCLEOTIDE SEQUENCE [LARGE SCALE GENOMIC DNA]</scope>
    <source>
        <strain>ATCC 33656 / DSM 3377 / JCM 17463 / KCTC 5835 / LMG 30912 / VPI 0990</strain>
    </source>
</reference>